<evidence type="ECO:0000255" key="1">
    <source>
        <dbReference type="HAMAP-Rule" id="MF_00036"/>
    </source>
</evidence>
<comment type="function">
    <text evidence="1">Catalyzes the attachment of alanine to tRNA(Ala) in a two-step reaction: alanine is first activated by ATP to form Ala-AMP and then transferred to the acceptor end of tRNA(Ala). Also edits incorrectly charged Ser-tRNA(Ala) and Gly-tRNA(Ala) via its editing domain.</text>
</comment>
<comment type="catalytic activity">
    <reaction evidence="1">
        <text>tRNA(Ala) + L-alanine + ATP = L-alanyl-tRNA(Ala) + AMP + diphosphate</text>
        <dbReference type="Rhea" id="RHEA:12540"/>
        <dbReference type="Rhea" id="RHEA-COMP:9657"/>
        <dbReference type="Rhea" id="RHEA-COMP:9923"/>
        <dbReference type="ChEBI" id="CHEBI:30616"/>
        <dbReference type="ChEBI" id="CHEBI:33019"/>
        <dbReference type="ChEBI" id="CHEBI:57972"/>
        <dbReference type="ChEBI" id="CHEBI:78442"/>
        <dbReference type="ChEBI" id="CHEBI:78497"/>
        <dbReference type="ChEBI" id="CHEBI:456215"/>
        <dbReference type="EC" id="6.1.1.7"/>
    </reaction>
</comment>
<comment type="cofactor">
    <cofactor evidence="1">
        <name>Zn(2+)</name>
        <dbReference type="ChEBI" id="CHEBI:29105"/>
    </cofactor>
    <text evidence="1">Binds 1 zinc ion per subunit.</text>
</comment>
<comment type="subcellular location">
    <subcellularLocation>
        <location evidence="1">Cytoplasm</location>
    </subcellularLocation>
</comment>
<comment type="domain">
    <text evidence="1">Consists of three domains; the N-terminal catalytic domain, the editing domain and the C-terminal C-Ala domain. The editing domain removes incorrectly charged amino acids, while the C-Ala domain, along with tRNA(Ala), serves as a bridge to cooperatively bring together the editing and aminoacylation centers thus stimulating deacylation of misacylated tRNAs.</text>
</comment>
<comment type="similarity">
    <text evidence="1">Belongs to the class-II aminoacyl-tRNA synthetase family.</text>
</comment>
<gene>
    <name evidence="1" type="primary">alaS</name>
    <name type="ordered locus">BMEI0789</name>
</gene>
<organism>
    <name type="scientific">Brucella melitensis biotype 1 (strain ATCC 23456 / CCUG 17765 / NCTC 10094 / 16M)</name>
    <dbReference type="NCBI Taxonomy" id="224914"/>
    <lineage>
        <taxon>Bacteria</taxon>
        <taxon>Pseudomonadati</taxon>
        <taxon>Pseudomonadota</taxon>
        <taxon>Alphaproteobacteria</taxon>
        <taxon>Hyphomicrobiales</taxon>
        <taxon>Brucellaceae</taxon>
        <taxon>Brucella/Ochrobactrum group</taxon>
        <taxon>Brucella</taxon>
    </lineage>
</organism>
<reference key="1">
    <citation type="journal article" date="2002" name="Proc. Natl. Acad. Sci. U.S.A.">
        <title>The genome sequence of the facultative intracellular pathogen Brucella melitensis.</title>
        <authorList>
            <person name="DelVecchio V.G."/>
            <person name="Kapatral V."/>
            <person name="Redkar R.J."/>
            <person name="Patra G."/>
            <person name="Mujer C."/>
            <person name="Los T."/>
            <person name="Ivanova N."/>
            <person name="Anderson I."/>
            <person name="Bhattacharyya A."/>
            <person name="Lykidis A."/>
            <person name="Reznik G."/>
            <person name="Jablonski L."/>
            <person name="Larsen N."/>
            <person name="D'Souza M."/>
            <person name="Bernal A."/>
            <person name="Mazur M."/>
            <person name="Goltsman E."/>
            <person name="Selkov E."/>
            <person name="Elzer P.H."/>
            <person name="Hagius S."/>
            <person name="O'Callaghan D."/>
            <person name="Letesson J.-J."/>
            <person name="Haselkorn R."/>
            <person name="Kyrpides N.C."/>
            <person name="Overbeek R."/>
        </authorList>
    </citation>
    <scope>NUCLEOTIDE SEQUENCE [LARGE SCALE GENOMIC DNA]</scope>
    <source>
        <strain>ATCC 23456 / CCUG 17765 / NCTC 10094 / 16M</strain>
    </source>
</reference>
<accession>P67008</accession>
<accession>Q8YHK8</accession>
<dbReference type="EC" id="6.1.1.7" evidence="1"/>
<dbReference type="EMBL" id="AE008917">
    <property type="protein sequence ID" value="AAL51970.1"/>
    <property type="molecule type" value="Genomic_DNA"/>
</dbReference>
<dbReference type="PIR" id="AG3350">
    <property type="entry name" value="AG3350"/>
</dbReference>
<dbReference type="RefSeq" id="WP_002964330.1">
    <property type="nucleotide sequence ID" value="NZ_GG703780.1"/>
</dbReference>
<dbReference type="SMR" id="P67008"/>
<dbReference type="GeneID" id="97533555"/>
<dbReference type="KEGG" id="bme:BMEI0789"/>
<dbReference type="KEGG" id="bmel:DK63_634"/>
<dbReference type="PATRIC" id="fig|224914.52.peg.663"/>
<dbReference type="eggNOG" id="COG0013">
    <property type="taxonomic scope" value="Bacteria"/>
</dbReference>
<dbReference type="PhylomeDB" id="P67008"/>
<dbReference type="Proteomes" id="UP000000419">
    <property type="component" value="Chromosome I"/>
</dbReference>
<dbReference type="GO" id="GO:0005829">
    <property type="term" value="C:cytosol"/>
    <property type="evidence" value="ECO:0007669"/>
    <property type="project" value="TreeGrafter"/>
</dbReference>
<dbReference type="GO" id="GO:0004813">
    <property type="term" value="F:alanine-tRNA ligase activity"/>
    <property type="evidence" value="ECO:0007669"/>
    <property type="project" value="UniProtKB-UniRule"/>
</dbReference>
<dbReference type="GO" id="GO:0002161">
    <property type="term" value="F:aminoacyl-tRNA deacylase activity"/>
    <property type="evidence" value="ECO:0007669"/>
    <property type="project" value="TreeGrafter"/>
</dbReference>
<dbReference type="GO" id="GO:0005524">
    <property type="term" value="F:ATP binding"/>
    <property type="evidence" value="ECO:0007669"/>
    <property type="project" value="UniProtKB-UniRule"/>
</dbReference>
<dbReference type="GO" id="GO:0000049">
    <property type="term" value="F:tRNA binding"/>
    <property type="evidence" value="ECO:0007669"/>
    <property type="project" value="UniProtKB-KW"/>
</dbReference>
<dbReference type="GO" id="GO:0008270">
    <property type="term" value="F:zinc ion binding"/>
    <property type="evidence" value="ECO:0007669"/>
    <property type="project" value="UniProtKB-UniRule"/>
</dbReference>
<dbReference type="GO" id="GO:0006419">
    <property type="term" value="P:alanyl-tRNA aminoacylation"/>
    <property type="evidence" value="ECO:0007669"/>
    <property type="project" value="UniProtKB-UniRule"/>
</dbReference>
<dbReference type="GO" id="GO:0045892">
    <property type="term" value="P:negative regulation of DNA-templated transcription"/>
    <property type="evidence" value="ECO:0007669"/>
    <property type="project" value="TreeGrafter"/>
</dbReference>
<dbReference type="CDD" id="cd00673">
    <property type="entry name" value="AlaRS_core"/>
    <property type="match status" value="1"/>
</dbReference>
<dbReference type="FunFam" id="2.40.30.130:FF:000001">
    <property type="entry name" value="Alanine--tRNA ligase"/>
    <property type="match status" value="1"/>
</dbReference>
<dbReference type="FunFam" id="3.10.310.40:FF:000001">
    <property type="entry name" value="Alanine--tRNA ligase"/>
    <property type="match status" value="1"/>
</dbReference>
<dbReference type="FunFam" id="3.30.54.20:FF:000001">
    <property type="entry name" value="Alanine--tRNA ligase"/>
    <property type="match status" value="1"/>
</dbReference>
<dbReference type="FunFam" id="3.30.930.10:FF:000004">
    <property type="entry name" value="Alanine--tRNA ligase"/>
    <property type="match status" value="1"/>
</dbReference>
<dbReference type="FunFam" id="3.30.980.10:FF:000004">
    <property type="entry name" value="Alanine--tRNA ligase, cytoplasmic"/>
    <property type="match status" value="1"/>
</dbReference>
<dbReference type="Gene3D" id="2.40.30.130">
    <property type="match status" value="1"/>
</dbReference>
<dbReference type="Gene3D" id="3.10.310.40">
    <property type="match status" value="1"/>
</dbReference>
<dbReference type="Gene3D" id="3.30.54.20">
    <property type="match status" value="1"/>
</dbReference>
<dbReference type="Gene3D" id="6.10.250.550">
    <property type="match status" value="1"/>
</dbReference>
<dbReference type="Gene3D" id="3.30.930.10">
    <property type="entry name" value="Bira Bifunctional Protein, Domain 2"/>
    <property type="match status" value="1"/>
</dbReference>
<dbReference type="Gene3D" id="3.30.980.10">
    <property type="entry name" value="Threonyl-trna Synthetase, Chain A, domain 2"/>
    <property type="match status" value="1"/>
</dbReference>
<dbReference type="HAMAP" id="MF_00036_B">
    <property type="entry name" value="Ala_tRNA_synth_B"/>
    <property type="match status" value="1"/>
</dbReference>
<dbReference type="InterPro" id="IPR045864">
    <property type="entry name" value="aa-tRNA-synth_II/BPL/LPL"/>
</dbReference>
<dbReference type="InterPro" id="IPR002318">
    <property type="entry name" value="Ala-tRNA-lgiase_IIc"/>
</dbReference>
<dbReference type="InterPro" id="IPR018162">
    <property type="entry name" value="Ala-tRNA-ligase_IIc_anticod-bd"/>
</dbReference>
<dbReference type="InterPro" id="IPR018165">
    <property type="entry name" value="Ala-tRNA-synth_IIc_core"/>
</dbReference>
<dbReference type="InterPro" id="IPR018164">
    <property type="entry name" value="Ala-tRNA-synth_IIc_N"/>
</dbReference>
<dbReference type="InterPro" id="IPR050058">
    <property type="entry name" value="Ala-tRNA_ligase"/>
</dbReference>
<dbReference type="InterPro" id="IPR023033">
    <property type="entry name" value="Ala_tRNA_ligase_euk/bac"/>
</dbReference>
<dbReference type="InterPro" id="IPR003156">
    <property type="entry name" value="DHHA1_dom"/>
</dbReference>
<dbReference type="InterPro" id="IPR018163">
    <property type="entry name" value="Thr/Ala-tRNA-synth_IIc_edit"/>
</dbReference>
<dbReference type="InterPro" id="IPR009000">
    <property type="entry name" value="Transl_B-barrel_sf"/>
</dbReference>
<dbReference type="InterPro" id="IPR012947">
    <property type="entry name" value="tRNA_SAD"/>
</dbReference>
<dbReference type="NCBIfam" id="TIGR00344">
    <property type="entry name" value="alaS"/>
    <property type="match status" value="1"/>
</dbReference>
<dbReference type="PANTHER" id="PTHR11777:SF9">
    <property type="entry name" value="ALANINE--TRNA LIGASE, CYTOPLASMIC"/>
    <property type="match status" value="1"/>
</dbReference>
<dbReference type="PANTHER" id="PTHR11777">
    <property type="entry name" value="ALANYL-TRNA SYNTHETASE"/>
    <property type="match status" value="1"/>
</dbReference>
<dbReference type="Pfam" id="PF02272">
    <property type="entry name" value="DHHA1"/>
    <property type="match status" value="1"/>
</dbReference>
<dbReference type="Pfam" id="PF01411">
    <property type="entry name" value="tRNA-synt_2c"/>
    <property type="match status" value="1"/>
</dbReference>
<dbReference type="Pfam" id="PF07973">
    <property type="entry name" value="tRNA_SAD"/>
    <property type="match status" value="1"/>
</dbReference>
<dbReference type="PRINTS" id="PR00980">
    <property type="entry name" value="TRNASYNTHALA"/>
</dbReference>
<dbReference type="SMART" id="SM00863">
    <property type="entry name" value="tRNA_SAD"/>
    <property type="match status" value="1"/>
</dbReference>
<dbReference type="SUPFAM" id="SSF55681">
    <property type="entry name" value="Class II aaRS and biotin synthetases"/>
    <property type="match status" value="1"/>
</dbReference>
<dbReference type="SUPFAM" id="SSF101353">
    <property type="entry name" value="Putative anticodon-binding domain of alanyl-tRNA synthetase (AlaRS)"/>
    <property type="match status" value="1"/>
</dbReference>
<dbReference type="SUPFAM" id="SSF55186">
    <property type="entry name" value="ThrRS/AlaRS common domain"/>
    <property type="match status" value="1"/>
</dbReference>
<dbReference type="SUPFAM" id="SSF50447">
    <property type="entry name" value="Translation proteins"/>
    <property type="match status" value="1"/>
</dbReference>
<dbReference type="PROSITE" id="PS50860">
    <property type="entry name" value="AA_TRNA_LIGASE_II_ALA"/>
    <property type="match status" value="1"/>
</dbReference>
<feature type="chain" id="PRO_0000075076" description="Alanine--tRNA ligase">
    <location>
        <begin position="1"/>
        <end position="885"/>
    </location>
</feature>
<feature type="binding site" evidence="1">
    <location>
        <position position="564"/>
    </location>
    <ligand>
        <name>Zn(2+)</name>
        <dbReference type="ChEBI" id="CHEBI:29105"/>
    </ligand>
</feature>
<feature type="binding site" evidence="1">
    <location>
        <position position="568"/>
    </location>
    <ligand>
        <name>Zn(2+)</name>
        <dbReference type="ChEBI" id="CHEBI:29105"/>
    </ligand>
</feature>
<feature type="binding site" evidence="1">
    <location>
        <position position="676"/>
    </location>
    <ligand>
        <name>Zn(2+)</name>
        <dbReference type="ChEBI" id="CHEBI:29105"/>
    </ligand>
</feature>
<feature type="binding site" evidence="1">
    <location>
        <position position="680"/>
    </location>
    <ligand>
        <name>Zn(2+)</name>
        <dbReference type="ChEBI" id="CHEBI:29105"/>
    </ligand>
</feature>
<keyword id="KW-0030">Aminoacyl-tRNA synthetase</keyword>
<keyword id="KW-0067">ATP-binding</keyword>
<keyword id="KW-0963">Cytoplasm</keyword>
<keyword id="KW-0436">Ligase</keyword>
<keyword id="KW-0479">Metal-binding</keyword>
<keyword id="KW-0547">Nucleotide-binding</keyword>
<keyword id="KW-0648">Protein biosynthesis</keyword>
<keyword id="KW-0694">RNA-binding</keyword>
<keyword id="KW-0820">tRNA-binding</keyword>
<keyword id="KW-0862">Zinc</keyword>
<name>SYA_BRUME</name>
<proteinExistence type="inferred from homology"/>
<protein>
    <recommendedName>
        <fullName evidence="1">Alanine--tRNA ligase</fullName>
        <ecNumber evidence="1">6.1.1.7</ecNumber>
    </recommendedName>
    <alternativeName>
        <fullName evidence="1">Alanyl-tRNA synthetase</fullName>
        <shortName evidence="1">AlaRS</shortName>
    </alternativeName>
</protein>
<sequence length="885" mass="95586">MAGVNEIRSTFLDYFRKNGHEVVPSSPLVPRNDPTLMFTNAGMVQFKNVFTGLEHRSYNRATTSQKCVRAGGKHNDLDNVGYTARHHTFFEMLGNFSFGDYFKEDAISFAWNLITREFGLPKDKLLVTVYHTDDDAANFWKKIAGLSDDRIIRIPTSDNFWAMGDTGPCGPCSEIFYDHGDHIWGGPPGSPEEDGDRFIEIWNLVFMQFEQQTPELRIDLPRPSIDTGMGLERIAAVLQGVHDNYDIDLFKALIRASEEATGVKAEGDFRASHRVIADHLRASSFLIADGVLPSNEGRGYVLRRIMRRAMRHAQLLGAKEPLMWRLLPALIREMGQAYPELIRAESLISETLKLEETRFRKTLERGLGLLSDASENLAEGDRLDGETAFKLYDTYGFPLDLTQDALRQRGIAVDTEGFNVAMERQKAEARANWTGSGEAATETIWFGIKDKVGATEFLGYETESAEGVIASLVRDGVEVPSVREGETISVVVNQTPFYGESGGQQGDTGTISGEGFVIAVKDTQKKGEGVFVHIGEVTEGTAKAGDVVELKVDSARRTRIRSNHSATHLLHEALRETLGTHVAQKGSLVAPDRLRFDFSHPKPISAEELEAVENLANEIILQNAPVTTRLMAVDDAIAEGAMALFGEKYGDEVRVVSMGTAKHGSKAGKAYSVELCGGTHVRQTGDIGLVRIISEGGVAAGVRRLEALTGEAARLYLEEQDERVKAIASALKTTSADVLDRVNALIDERKKLERELADARKKLALGGGSSDGGSAVEAVNGVNFLGKIVTGVSPRDLKPLADEGKKQVGSGVVLFIGVGEDGKASAVAAVTEDMVGRFSAVDLVRAASAALGGAGGGGRPDMAQAGGPDGAKAADAIAAVKALIA</sequence>